<organism>
    <name type="scientific">Corynebacterium glutamicum (strain R)</name>
    <dbReference type="NCBI Taxonomy" id="340322"/>
    <lineage>
        <taxon>Bacteria</taxon>
        <taxon>Bacillati</taxon>
        <taxon>Actinomycetota</taxon>
        <taxon>Actinomycetes</taxon>
        <taxon>Mycobacteriales</taxon>
        <taxon>Corynebacteriaceae</taxon>
        <taxon>Corynebacterium</taxon>
    </lineage>
</organism>
<name>RECR_CORGB</name>
<keyword id="KW-0227">DNA damage</keyword>
<keyword id="KW-0233">DNA recombination</keyword>
<keyword id="KW-0234">DNA repair</keyword>
<keyword id="KW-0479">Metal-binding</keyword>
<keyword id="KW-0862">Zinc</keyword>
<keyword id="KW-0863">Zinc-finger</keyword>
<reference key="1">
    <citation type="journal article" date="2007" name="Microbiology">
        <title>Comparative analysis of the Corynebacterium glutamicum group and complete genome sequence of strain R.</title>
        <authorList>
            <person name="Yukawa H."/>
            <person name="Omumasaba C.A."/>
            <person name="Nonaka H."/>
            <person name="Kos P."/>
            <person name="Okai N."/>
            <person name="Suzuki N."/>
            <person name="Suda M."/>
            <person name="Tsuge Y."/>
            <person name="Watanabe J."/>
            <person name="Ikeda Y."/>
            <person name="Vertes A.A."/>
            <person name="Inui M."/>
        </authorList>
    </citation>
    <scope>NUCLEOTIDE SEQUENCE [LARGE SCALE GENOMIC DNA]</scope>
    <source>
        <strain>R</strain>
    </source>
</reference>
<comment type="function">
    <text evidence="1">May play a role in DNA repair. It seems to be involved in an RecBC-independent recombinational process of DNA repair. It may act with RecF and RecO.</text>
</comment>
<comment type="similarity">
    <text evidence="1">Belongs to the RecR family.</text>
</comment>
<evidence type="ECO:0000255" key="1">
    <source>
        <dbReference type="HAMAP-Rule" id="MF_00017"/>
    </source>
</evidence>
<protein>
    <recommendedName>
        <fullName evidence="1">Recombination protein RecR</fullName>
    </recommendedName>
</protein>
<feature type="chain" id="PRO_0000322880" description="Recombination protein RecR">
    <location>
        <begin position="1"/>
        <end position="218"/>
    </location>
</feature>
<feature type="domain" description="Toprim" evidence="1">
    <location>
        <begin position="79"/>
        <end position="195"/>
    </location>
</feature>
<feature type="zinc finger region" description="C4-type" evidence="1">
    <location>
        <begin position="56"/>
        <end position="71"/>
    </location>
</feature>
<proteinExistence type="inferred from homology"/>
<gene>
    <name evidence="1" type="primary">recR</name>
    <name type="ordered locus">cgR_0316</name>
</gene>
<sequence>MFEGPLQDLIDELSRLPGVGPKSAQRIAFHLLNVDPTDITRLQEALGGVRDGVQFCRICCNISREEVCRICSDSGRDGGTICVVEEPKDIQVIERTGEFSGRYHVLGGALDPLANIGPRELNISTLLQRIGGVLPDRELADSTPENKLFDATPTVREVILATDPNTEGEATASYLGRLLKDFPDLVVSRLASGMPLGGDLEFVDELTLSRALSGRLQI</sequence>
<accession>A4QAN3</accession>
<dbReference type="EMBL" id="AP009044">
    <property type="protein sequence ID" value="BAF53280.1"/>
    <property type="molecule type" value="Genomic_DNA"/>
</dbReference>
<dbReference type="RefSeq" id="WP_003855678.1">
    <property type="nucleotide sequence ID" value="NC_009342.1"/>
</dbReference>
<dbReference type="SMR" id="A4QAN3"/>
<dbReference type="KEGG" id="cgt:cgR_0316"/>
<dbReference type="HOGENOM" id="CLU_060739_1_0_11"/>
<dbReference type="PhylomeDB" id="A4QAN3"/>
<dbReference type="Proteomes" id="UP000006698">
    <property type="component" value="Chromosome"/>
</dbReference>
<dbReference type="GO" id="GO:0003677">
    <property type="term" value="F:DNA binding"/>
    <property type="evidence" value="ECO:0007669"/>
    <property type="project" value="UniProtKB-UniRule"/>
</dbReference>
<dbReference type="GO" id="GO:0008270">
    <property type="term" value="F:zinc ion binding"/>
    <property type="evidence" value="ECO:0007669"/>
    <property type="project" value="UniProtKB-KW"/>
</dbReference>
<dbReference type="GO" id="GO:0006310">
    <property type="term" value="P:DNA recombination"/>
    <property type="evidence" value="ECO:0007669"/>
    <property type="project" value="UniProtKB-UniRule"/>
</dbReference>
<dbReference type="GO" id="GO:0006281">
    <property type="term" value="P:DNA repair"/>
    <property type="evidence" value="ECO:0007669"/>
    <property type="project" value="UniProtKB-UniRule"/>
</dbReference>
<dbReference type="CDD" id="cd01025">
    <property type="entry name" value="TOPRIM_recR"/>
    <property type="match status" value="1"/>
</dbReference>
<dbReference type="Gene3D" id="3.30.60.80">
    <property type="match status" value="1"/>
</dbReference>
<dbReference type="Gene3D" id="3.40.1360.10">
    <property type="match status" value="1"/>
</dbReference>
<dbReference type="Gene3D" id="6.10.250.240">
    <property type="match status" value="1"/>
</dbReference>
<dbReference type="Gene3D" id="1.10.8.420">
    <property type="entry name" value="RecR Domain 1"/>
    <property type="match status" value="1"/>
</dbReference>
<dbReference type="HAMAP" id="MF_00017">
    <property type="entry name" value="RecR"/>
    <property type="match status" value="1"/>
</dbReference>
<dbReference type="InterPro" id="IPR000093">
    <property type="entry name" value="DNA_Rcmb_RecR"/>
</dbReference>
<dbReference type="InterPro" id="IPR003583">
    <property type="entry name" value="Hlx-hairpin-Hlx_DNA-bd_motif"/>
</dbReference>
<dbReference type="InterPro" id="IPR023627">
    <property type="entry name" value="Rcmb_RecR"/>
</dbReference>
<dbReference type="InterPro" id="IPR015967">
    <property type="entry name" value="Rcmb_RecR_Znf"/>
</dbReference>
<dbReference type="InterPro" id="IPR006171">
    <property type="entry name" value="TOPRIM_dom"/>
</dbReference>
<dbReference type="InterPro" id="IPR034137">
    <property type="entry name" value="TOPRIM_RecR"/>
</dbReference>
<dbReference type="PANTHER" id="PTHR30446">
    <property type="entry name" value="RECOMBINATION PROTEIN RECR"/>
    <property type="match status" value="1"/>
</dbReference>
<dbReference type="PANTHER" id="PTHR30446:SF0">
    <property type="entry name" value="RECOMBINATION PROTEIN RECR"/>
    <property type="match status" value="1"/>
</dbReference>
<dbReference type="Pfam" id="PF21175">
    <property type="entry name" value="RecR_C"/>
    <property type="match status" value="1"/>
</dbReference>
<dbReference type="Pfam" id="PF21176">
    <property type="entry name" value="RecR_HhH"/>
    <property type="match status" value="1"/>
</dbReference>
<dbReference type="Pfam" id="PF02132">
    <property type="entry name" value="RecR_ZnF"/>
    <property type="match status" value="1"/>
</dbReference>
<dbReference type="Pfam" id="PF13662">
    <property type="entry name" value="Toprim_4"/>
    <property type="match status" value="1"/>
</dbReference>
<dbReference type="SMART" id="SM00278">
    <property type="entry name" value="HhH1"/>
    <property type="match status" value="1"/>
</dbReference>
<dbReference type="SMART" id="SM00493">
    <property type="entry name" value="TOPRIM"/>
    <property type="match status" value="1"/>
</dbReference>
<dbReference type="SUPFAM" id="SSF111304">
    <property type="entry name" value="Recombination protein RecR"/>
    <property type="match status" value="1"/>
</dbReference>
<dbReference type="PROSITE" id="PS01300">
    <property type="entry name" value="RECR"/>
    <property type="match status" value="1"/>
</dbReference>
<dbReference type="PROSITE" id="PS50880">
    <property type="entry name" value="TOPRIM"/>
    <property type="match status" value="1"/>
</dbReference>